<protein>
    <recommendedName>
        <fullName evidence="1">Large ribosomal subunit protein uL4</fullName>
    </recommendedName>
    <alternativeName>
        <fullName evidence="3">50S ribosomal protein L4</fullName>
    </alternativeName>
</protein>
<gene>
    <name evidence="1" type="primary">rplD</name>
    <name type="ordered locus">CGSHiEE_08170</name>
</gene>
<reference key="1">
    <citation type="journal article" date="2007" name="Genome Biol.">
        <title>Characterization and modeling of the Haemophilus influenzae core and supragenomes based on the complete genomic sequences of Rd and 12 clinical nontypeable strains.</title>
        <authorList>
            <person name="Hogg J.S."/>
            <person name="Hu F.Z."/>
            <person name="Janto B."/>
            <person name="Boissy R."/>
            <person name="Hayes J."/>
            <person name="Keefe R."/>
            <person name="Post J.C."/>
            <person name="Ehrlich G.D."/>
        </authorList>
    </citation>
    <scope>NUCLEOTIDE SEQUENCE [LARGE SCALE GENOMIC DNA]</scope>
    <source>
        <strain>PittEE</strain>
    </source>
</reference>
<sequence length="200" mass="21954">MELQVVGANALTVSETTFGREFNEALIHQVVVAYAAGARQGTRAQKTRAEVSGSGKKPWRQKGTGRARAGDIKSPIWRSGGTTFAAKPQDHSQKVNKKMYRGAIKSILSELVRQDRLVVVEKFELDAPKTKVLVQKLKDLAVEDALIITASLDENLFLAARNLYKVDVRDVQGIDPVSLIAFDKVIVTVDAVKQIEEILA</sequence>
<accession>A5UDU6</accession>
<evidence type="ECO:0000255" key="1">
    <source>
        <dbReference type="HAMAP-Rule" id="MF_01328"/>
    </source>
</evidence>
<evidence type="ECO:0000256" key="2">
    <source>
        <dbReference type="SAM" id="MobiDB-lite"/>
    </source>
</evidence>
<evidence type="ECO:0000305" key="3"/>
<feature type="chain" id="PRO_1000052409" description="Large ribosomal subunit protein uL4">
    <location>
        <begin position="1"/>
        <end position="200"/>
    </location>
</feature>
<feature type="region of interest" description="Disordered" evidence="2">
    <location>
        <begin position="43"/>
        <end position="67"/>
    </location>
</feature>
<comment type="function">
    <text evidence="1">One of the primary rRNA binding proteins, this protein initially binds near the 5'-end of the 23S rRNA. It is important during the early stages of 50S assembly. It makes multiple contacts with different domains of the 23S rRNA in the assembled 50S subunit and ribosome.</text>
</comment>
<comment type="function">
    <text evidence="1">Forms part of the polypeptide exit tunnel.</text>
</comment>
<comment type="subunit">
    <text evidence="1">Part of the 50S ribosomal subunit.</text>
</comment>
<comment type="similarity">
    <text evidence="1">Belongs to the universal ribosomal protein uL4 family.</text>
</comment>
<organism>
    <name type="scientific">Haemophilus influenzae (strain PittEE)</name>
    <dbReference type="NCBI Taxonomy" id="374930"/>
    <lineage>
        <taxon>Bacteria</taxon>
        <taxon>Pseudomonadati</taxon>
        <taxon>Pseudomonadota</taxon>
        <taxon>Gammaproteobacteria</taxon>
        <taxon>Pasteurellales</taxon>
        <taxon>Pasteurellaceae</taxon>
        <taxon>Haemophilus</taxon>
    </lineage>
</organism>
<dbReference type="EMBL" id="CP000671">
    <property type="protein sequence ID" value="ABQ98947.1"/>
    <property type="molecule type" value="Genomic_DNA"/>
</dbReference>
<dbReference type="SMR" id="A5UDU6"/>
<dbReference type="KEGG" id="hip:CGSHiEE_08170"/>
<dbReference type="HOGENOM" id="CLU_041575_5_2_6"/>
<dbReference type="GO" id="GO:1990904">
    <property type="term" value="C:ribonucleoprotein complex"/>
    <property type="evidence" value="ECO:0007669"/>
    <property type="project" value="UniProtKB-KW"/>
</dbReference>
<dbReference type="GO" id="GO:0005840">
    <property type="term" value="C:ribosome"/>
    <property type="evidence" value="ECO:0007669"/>
    <property type="project" value="UniProtKB-KW"/>
</dbReference>
<dbReference type="GO" id="GO:0019843">
    <property type="term" value="F:rRNA binding"/>
    <property type="evidence" value="ECO:0007669"/>
    <property type="project" value="UniProtKB-UniRule"/>
</dbReference>
<dbReference type="GO" id="GO:0003735">
    <property type="term" value="F:structural constituent of ribosome"/>
    <property type="evidence" value="ECO:0007669"/>
    <property type="project" value="InterPro"/>
</dbReference>
<dbReference type="GO" id="GO:0006412">
    <property type="term" value="P:translation"/>
    <property type="evidence" value="ECO:0007669"/>
    <property type="project" value="UniProtKB-UniRule"/>
</dbReference>
<dbReference type="FunFam" id="3.40.1370.10:FF:000001">
    <property type="entry name" value="50S ribosomal protein L4"/>
    <property type="match status" value="1"/>
</dbReference>
<dbReference type="Gene3D" id="3.40.1370.10">
    <property type="match status" value="1"/>
</dbReference>
<dbReference type="HAMAP" id="MF_01328_B">
    <property type="entry name" value="Ribosomal_uL4_B"/>
    <property type="match status" value="1"/>
</dbReference>
<dbReference type="InterPro" id="IPR002136">
    <property type="entry name" value="Ribosomal_uL4"/>
</dbReference>
<dbReference type="InterPro" id="IPR013005">
    <property type="entry name" value="Ribosomal_uL4-like"/>
</dbReference>
<dbReference type="InterPro" id="IPR023574">
    <property type="entry name" value="Ribosomal_uL4_dom_sf"/>
</dbReference>
<dbReference type="NCBIfam" id="TIGR03953">
    <property type="entry name" value="rplD_bact"/>
    <property type="match status" value="1"/>
</dbReference>
<dbReference type="PANTHER" id="PTHR10746">
    <property type="entry name" value="50S RIBOSOMAL PROTEIN L4"/>
    <property type="match status" value="1"/>
</dbReference>
<dbReference type="PANTHER" id="PTHR10746:SF6">
    <property type="entry name" value="LARGE RIBOSOMAL SUBUNIT PROTEIN UL4M"/>
    <property type="match status" value="1"/>
</dbReference>
<dbReference type="Pfam" id="PF00573">
    <property type="entry name" value="Ribosomal_L4"/>
    <property type="match status" value="1"/>
</dbReference>
<dbReference type="SUPFAM" id="SSF52166">
    <property type="entry name" value="Ribosomal protein L4"/>
    <property type="match status" value="1"/>
</dbReference>
<proteinExistence type="inferred from homology"/>
<name>RL4_HAEIE</name>
<keyword id="KW-0687">Ribonucleoprotein</keyword>
<keyword id="KW-0689">Ribosomal protein</keyword>
<keyword id="KW-0694">RNA-binding</keyword>
<keyword id="KW-0699">rRNA-binding</keyword>